<accession>Q9U3D4</accession>
<accession>B3GWD9</accession>
<accession>H2L2K5</accession>
<accession>Q9XTV2</accession>
<evidence type="ECO:0000250" key="1"/>
<evidence type="ECO:0000255" key="2"/>
<evidence type="ECO:0000256" key="3">
    <source>
        <dbReference type="SAM" id="MobiDB-lite"/>
    </source>
</evidence>
<evidence type="ECO:0000269" key="4">
    <source>
    </source>
</evidence>
<evidence type="ECO:0000303" key="5">
    <source>
    </source>
</evidence>
<evidence type="ECO:0000305" key="6"/>
<evidence type="ECO:0000305" key="7">
    <source>
    </source>
</evidence>
<protein>
    <recommendedName>
        <fullName>Phosphatidylcholine:ceramide cholinephosphotransferase 1</fullName>
        <shortName evidence="5">PC:ceramide cholinephosphotransferase 1</shortName>
        <ecNumber evidence="4">2.7.8.27</ecNumber>
    </recommendedName>
    <alternativeName>
        <fullName evidence="5">Sphingomyelin synthase 1</fullName>
        <shortName evidence="5">CSS3alpha1</shortName>
        <shortName evidence="5">SMS-1</shortName>
    </alternativeName>
</protein>
<sequence length="469" mass="52642">MSVTVEVADEETHDVPLVEQVRTTPDQNVDVKVQENNVVTTKIGPKLETIPAAKMQDDNGDEEKAENSEGAAAEKVEKQHDDDGVVVHEETDGVASSRSSHHDKQKPGETKKSGDGKMDDDDIITTARSSSRRICGSAASSSDSETADDAPLLPDEGPSHAVRLEMPGDKPASPHDRFPKTPLKTLVAFLMLVVAAAGNTITLSWIHERYPLTPPLPDIVFELIPKIPWGLRLCENLMIGSFVSLLVLILFHRHRWIVLRRLCFIGSILYGMRCITMMVTPVPKADEDFECSPRFGENATFSLIVMRGVWSMFGLGLNLFDNQKVVLCGDYIYSGHTLVLVVSALFIGEYSPRRFYILHWLSWLVCSVGVIFLVLSHGHYTIDVILSYFACTRVFWAYHTQAAHPSIRLSVQNHQAKEFWFPLLRWFEGDIRRPVPRRFDCPISYSQVCNAFRRVRPRGRNGAARPAFE</sequence>
<name>SMS1_CAEEL</name>
<reference key="1">
    <citation type="journal article" date="1998" name="Science">
        <title>Genome sequence of the nematode C. elegans: a platform for investigating biology.</title>
        <authorList>
            <consortium name="The C. elegans sequencing consortium"/>
        </authorList>
    </citation>
    <scope>NUCLEOTIDE SEQUENCE [LARGE SCALE GENOMIC DNA]</scope>
    <scope>ALTERNATIVE SPLICING</scope>
    <source>
        <strain>Bristol N2</strain>
    </source>
</reference>
<reference evidence="6" key="2">
    <citation type="journal article" date="2004" name="EMBO J.">
        <title>Identification of a family of animal sphingomyelin synthases.</title>
        <authorList>
            <person name="Huitema K."/>
            <person name="Van Den Dikkenberg J."/>
            <person name="Brouwers J.F.H.M."/>
            <person name="Holthuis J.C."/>
        </authorList>
    </citation>
    <scope>FUNCTION</scope>
    <scope>CATALYTIC ACTIVITY</scope>
    <scope>PATHWAY</scope>
</reference>
<organism>
    <name type="scientific">Caenorhabditis elegans</name>
    <dbReference type="NCBI Taxonomy" id="6239"/>
    <lineage>
        <taxon>Eukaryota</taxon>
        <taxon>Metazoa</taxon>
        <taxon>Ecdysozoa</taxon>
        <taxon>Nematoda</taxon>
        <taxon>Chromadorea</taxon>
        <taxon>Rhabditida</taxon>
        <taxon>Rhabditina</taxon>
        <taxon>Rhabditomorpha</taxon>
        <taxon>Rhabditoidea</taxon>
        <taxon>Rhabditidae</taxon>
        <taxon>Peloderinae</taxon>
        <taxon>Caenorhabditis</taxon>
    </lineage>
</organism>
<feature type="chain" id="PRO_0000221074" description="Phosphatidylcholine:ceramide cholinephosphotransferase 1">
    <location>
        <begin position="1"/>
        <end position="469"/>
    </location>
</feature>
<feature type="transmembrane region" description="Helical" evidence="2">
    <location>
        <begin position="186"/>
        <end position="206"/>
    </location>
</feature>
<feature type="transmembrane region" description="Helical" evidence="2">
    <location>
        <begin position="231"/>
        <end position="251"/>
    </location>
</feature>
<feature type="transmembrane region" description="Helical" evidence="2">
    <location>
        <begin position="262"/>
        <end position="282"/>
    </location>
</feature>
<feature type="transmembrane region" description="Helical" evidence="2">
    <location>
        <begin position="300"/>
        <end position="320"/>
    </location>
</feature>
<feature type="transmembrane region" description="Helical" evidence="2">
    <location>
        <begin position="327"/>
        <end position="347"/>
    </location>
</feature>
<feature type="transmembrane region" description="Helical" evidence="2">
    <location>
        <begin position="355"/>
        <end position="375"/>
    </location>
</feature>
<feature type="topological domain" description="Cytoplasmic" evidence="2">
    <location>
        <begin position="376"/>
        <end position="469"/>
    </location>
</feature>
<feature type="region of interest" description="Disordered" evidence="3">
    <location>
        <begin position="40"/>
        <end position="177"/>
    </location>
</feature>
<feature type="compositionally biased region" description="Basic and acidic residues" evidence="3">
    <location>
        <begin position="72"/>
        <end position="91"/>
    </location>
</feature>
<feature type="compositionally biased region" description="Basic and acidic residues" evidence="3">
    <location>
        <begin position="100"/>
        <end position="117"/>
    </location>
</feature>
<feature type="compositionally biased region" description="Basic and acidic residues" evidence="3">
    <location>
        <begin position="162"/>
        <end position="177"/>
    </location>
</feature>
<feature type="active site" evidence="1">
    <location>
        <position position="336"/>
    </location>
</feature>
<feature type="active site" evidence="1">
    <location>
        <position position="379"/>
    </location>
</feature>
<feature type="active site" evidence="1">
    <location>
        <position position="383"/>
    </location>
</feature>
<feature type="splice variant" id="VSP_039807" description="In isoform c." evidence="6">
    <location>
        <begin position="1"/>
        <end position="117"/>
    </location>
</feature>
<feature type="splice variant" id="VSP_050674" description="In isoform a." evidence="6">
    <original>MSVTVEVADEETHDVPLVEQVRTTPDQNVDVKVQENNVVTTKIGPKLETIPAAKMQ</original>
    <variation>MKMSWNHQYTNYGSIA</variation>
    <location>
        <begin position="1"/>
        <end position="56"/>
    </location>
</feature>
<feature type="splice variant" id="VSP_061062" description="In isoform d.">
    <location>
        <begin position="1"/>
        <end position="54"/>
    </location>
</feature>
<dbReference type="EC" id="2.7.8.27" evidence="4"/>
<dbReference type="EMBL" id="Z95619">
    <property type="protein sequence ID" value="CAB09114.2"/>
    <property type="molecule type" value="Genomic_DNA"/>
</dbReference>
<dbReference type="EMBL" id="Z95619">
    <property type="protein sequence ID" value="CAB54269.2"/>
    <property type="molecule type" value="Genomic_DNA"/>
</dbReference>
<dbReference type="EMBL" id="Z95619">
    <property type="protein sequence ID" value="CAQ58114.2"/>
    <property type="molecule type" value="Genomic_DNA"/>
</dbReference>
<dbReference type="EMBL" id="BX284604">
    <property type="protein sequence ID" value="CCE72098.1"/>
    <property type="molecule type" value="Genomic_DNA"/>
</dbReference>
<dbReference type="PIR" id="T23111">
    <property type="entry name" value="T23111"/>
</dbReference>
<dbReference type="PIR" id="T23112">
    <property type="entry name" value="T23112"/>
</dbReference>
<dbReference type="RefSeq" id="NP_001129861.2">
    <molecule id="Q9U3D4-3"/>
    <property type="nucleotide sequence ID" value="NM_001136389.4"/>
</dbReference>
<dbReference type="RefSeq" id="NP_001255559.1">
    <molecule id="Q9U3D4-4"/>
    <property type="nucleotide sequence ID" value="NM_001268630.3"/>
</dbReference>
<dbReference type="RefSeq" id="NP_502168.2">
    <molecule id="Q9U3D4-1"/>
    <property type="nucleotide sequence ID" value="NM_069767.6"/>
</dbReference>
<dbReference type="RefSeq" id="NP_502169.2">
    <molecule id="Q9U3D4-2"/>
    <property type="nucleotide sequence ID" value="NM_069768.6"/>
</dbReference>
<dbReference type="SMR" id="Q9U3D4"/>
<dbReference type="BioGRID" id="43169">
    <property type="interactions" value="3"/>
</dbReference>
<dbReference type="DIP" id="DIP-25498N"/>
<dbReference type="FunCoup" id="Q9U3D4">
    <property type="interactions" value="123"/>
</dbReference>
<dbReference type="IntAct" id="Q9U3D4">
    <property type="interactions" value="1"/>
</dbReference>
<dbReference type="STRING" id="6239.H21P03.3b.1"/>
<dbReference type="SwissLipids" id="SLP:000000013"/>
<dbReference type="PaxDb" id="6239-H21P03.3b"/>
<dbReference type="EnsemblMetazoa" id="H21P03.3a.1">
    <molecule id="Q9U3D4-2"/>
    <property type="protein sequence ID" value="H21P03.3a.1"/>
    <property type="gene ID" value="WBGene00004892"/>
</dbReference>
<dbReference type="EnsemblMetazoa" id="H21P03.3b.1">
    <molecule id="Q9U3D4-1"/>
    <property type="protein sequence ID" value="H21P03.3b.1"/>
    <property type="gene ID" value="WBGene00004892"/>
</dbReference>
<dbReference type="EnsemblMetazoa" id="H21P03.3c.1">
    <molecule id="Q9U3D4-3"/>
    <property type="protein sequence ID" value="H21P03.3c.1"/>
    <property type="gene ID" value="WBGene00004892"/>
</dbReference>
<dbReference type="EnsemblMetazoa" id="H21P03.3d.1">
    <molecule id="Q9U3D4-4"/>
    <property type="protein sequence ID" value="H21P03.3d.1"/>
    <property type="gene ID" value="WBGene00004892"/>
</dbReference>
<dbReference type="GeneID" id="178072"/>
<dbReference type="KEGG" id="cel:CELE_H21P03.3"/>
<dbReference type="UCSC" id="H21P03.3a">
    <molecule id="Q9U3D4-1"/>
    <property type="organism name" value="c. elegans"/>
</dbReference>
<dbReference type="AGR" id="WB:WBGene00004892"/>
<dbReference type="CTD" id="178072"/>
<dbReference type="WormBase" id="H21P03.3a">
    <molecule id="Q9U3D4-2"/>
    <property type="protein sequence ID" value="CE44486"/>
    <property type="gene ID" value="WBGene00004892"/>
    <property type="gene designation" value="sms-1"/>
</dbReference>
<dbReference type="WormBase" id="H21P03.3b">
    <molecule id="Q9U3D4-1"/>
    <property type="protein sequence ID" value="CE44496"/>
    <property type="gene ID" value="WBGene00004892"/>
    <property type="gene designation" value="sms-1"/>
</dbReference>
<dbReference type="WormBase" id="H21P03.3c">
    <molecule id="Q9U3D4-3"/>
    <property type="protein sequence ID" value="CE44516"/>
    <property type="gene ID" value="WBGene00004892"/>
    <property type="gene designation" value="sms-1"/>
</dbReference>
<dbReference type="WormBase" id="H21P03.3d">
    <molecule id="Q9U3D4-4"/>
    <property type="protein sequence ID" value="CE46610"/>
    <property type="gene ID" value="WBGene00004892"/>
    <property type="gene designation" value="sms-1"/>
</dbReference>
<dbReference type="eggNOG" id="KOG3058">
    <property type="taxonomic scope" value="Eukaryota"/>
</dbReference>
<dbReference type="GeneTree" id="ENSGT00940000170729"/>
<dbReference type="InParanoid" id="Q9U3D4"/>
<dbReference type="OMA" id="HWPLRCP"/>
<dbReference type="OrthoDB" id="422827at2759"/>
<dbReference type="PhylomeDB" id="Q9U3D4"/>
<dbReference type="BRENDA" id="2.7.8.27">
    <property type="organism ID" value="1045"/>
</dbReference>
<dbReference type="Reactome" id="R-CEL-1660661">
    <property type="pathway name" value="Sphingolipid de novo biosynthesis"/>
</dbReference>
<dbReference type="SignaLink" id="Q9U3D4"/>
<dbReference type="UniPathway" id="UPA00222"/>
<dbReference type="PRO" id="PR:Q9U3D4"/>
<dbReference type="Proteomes" id="UP000001940">
    <property type="component" value="Chromosome IV"/>
</dbReference>
<dbReference type="Bgee" id="WBGene00004892">
    <property type="expression patterns" value="Expressed in embryo and 4 other cell types or tissues"/>
</dbReference>
<dbReference type="ExpressionAtlas" id="Q9U3D4">
    <property type="expression patterns" value="baseline and differential"/>
</dbReference>
<dbReference type="GO" id="GO:0005789">
    <property type="term" value="C:endoplasmic reticulum membrane"/>
    <property type="evidence" value="ECO:0000318"/>
    <property type="project" value="GO_Central"/>
</dbReference>
<dbReference type="GO" id="GO:0000139">
    <property type="term" value="C:Golgi membrane"/>
    <property type="evidence" value="ECO:0000250"/>
    <property type="project" value="UniProtKB"/>
</dbReference>
<dbReference type="GO" id="GO:0005886">
    <property type="term" value="C:plasma membrane"/>
    <property type="evidence" value="ECO:0000318"/>
    <property type="project" value="GO_Central"/>
</dbReference>
<dbReference type="GO" id="GO:0047493">
    <property type="term" value="F:ceramide cholinephosphotransferase activity"/>
    <property type="evidence" value="ECO:0000250"/>
    <property type="project" value="UniProtKB"/>
</dbReference>
<dbReference type="GO" id="GO:0033188">
    <property type="term" value="F:sphingomyelin synthase activity"/>
    <property type="evidence" value="ECO:0000318"/>
    <property type="project" value="GO_Central"/>
</dbReference>
<dbReference type="GO" id="GO:0046513">
    <property type="term" value="P:ceramide biosynthetic process"/>
    <property type="evidence" value="ECO:0000318"/>
    <property type="project" value="GO_Central"/>
</dbReference>
<dbReference type="GO" id="GO:0006686">
    <property type="term" value="P:sphingomyelin biosynthetic process"/>
    <property type="evidence" value="ECO:0000250"/>
    <property type="project" value="UniProtKB"/>
</dbReference>
<dbReference type="InterPro" id="IPR045221">
    <property type="entry name" value="Sphingomyelin_synth-like"/>
</dbReference>
<dbReference type="InterPro" id="IPR025749">
    <property type="entry name" value="Sphingomyelin_synth-like_dom"/>
</dbReference>
<dbReference type="PANTHER" id="PTHR21290:SF27">
    <property type="entry name" value="PHOSPHATIDYLCHOLINE:CERAMIDE CHOLINEPHOSPHOTRANSFERASE 1"/>
    <property type="match status" value="1"/>
</dbReference>
<dbReference type="PANTHER" id="PTHR21290">
    <property type="entry name" value="SPHINGOMYELIN SYNTHETASE"/>
    <property type="match status" value="1"/>
</dbReference>
<dbReference type="Pfam" id="PF14360">
    <property type="entry name" value="PAP2_C"/>
    <property type="match status" value="1"/>
</dbReference>
<gene>
    <name type="primary">sms-1</name>
    <name type="ORF">H21P03.3</name>
</gene>
<proteinExistence type="evidence at protein level"/>
<keyword id="KW-0025">Alternative splicing</keyword>
<keyword id="KW-0333">Golgi apparatus</keyword>
<keyword id="KW-0443">Lipid metabolism</keyword>
<keyword id="KW-0472">Membrane</keyword>
<keyword id="KW-1185">Reference proteome</keyword>
<keyword id="KW-0746">Sphingolipid metabolism</keyword>
<keyword id="KW-0808">Transferase</keyword>
<keyword id="KW-0812">Transmembrane</keyword>
<keyword id="KW-1133">Transmembrane helix</keyword>
<comment type="function">
    <text evidence="4">Sphingomyelin synthases (SM synthase or SMS) synthesize the sphingolipid sphingomyelin (SM) through transfer of the phosphatidyl head group of 1,2-diacyl-sn-glycero-3-phosphocholine (phosphatidylcholine, PC) on to the primary hydroxyl of ceramide (N-acylsphingoid base), yielding 1,2-diacyl-sn-glycerol (diacylglycerol, DAG) as a side product. Functions as a bidirectional lipid cholinephosphotransferases capable of converting PC and ceramide to SM and DAG and vice versa depending on the respective levels of ceramide and DAG as phosphocholine acceptors, respectively.</text>
</comment>
<comment type="catalytic activity">
    <reaction evidence="4">
        <text>an N-acylsphing-4-enine + a 1,2-diacyl-sn-glycero-3-phosphocholine = a sphingomyelin + a 1,2-diacyl-sn-glycerol</text>
        <dbReference type="Rhea" id="RHEA:18765"/>
        <dbReference type="ChEBI" id="CHEBI:17636"/>
        <dbReference type="ChEBI" id="CHEBI:17815"/>
        <dbReference type="ChEBI" id="CHEBI:52639"/>
        <dbReference type="ChEBI" id="CHEBI:57643"/>
        <dbReference type="EC" id="2.7.8.27"/>
    </reaction>
    <physiologicalReaction direction="left-to-right" evidence="4">
        <dbReference type="Rhea" id="RHEA:18766"/>
    </physiologicalReaction>
    <physiologicalReaction direction="right-to-left" evidence="4">
        <dbReference type="Rhea" id="RHEA:18767"/>
    </physiologicalReaction>
</comment>
<comment type="catalytic activity">
    <reaction evidence="7">
        <text>an N-acyl-15-methylhexadecasphing-4-enine + a 1,2-diacyl-sn-glycero-3-phosphocholine = an N-acyl-15-methylhexadecasphing-4-enine-1-phosphocholine + a 1,2-diacyl-sn-glycerol</text>
        <dbReference type="Rhea" id="RHEA:34607"/>
        <dbReference type="ChEBI" id="CHEBI:17815"/>
        <dbReference type="ChEBI" id="CHEBI:57643"/>
        <dbReference type="ChEBI" id="CHEBI:70775"/>
        <dbReference type="ChEBI" id="CHEBI:70846"/>
    </reaction>
    <physiologicalReaction direction="left-to-right" evidence="7">
        <dbReference type="Rhea" id="RHEA:34608"/>
    </physiologicalReaction>
    <physiologicalReaction direction="right-to-left" evidence="7">
        <dbReference type="Rhea" id="RHEA:34609"/>
    </physiologicalReaction>
</comment>
<comment type="pathway">
    <text evidence="4">Lipid metabolism; sphingolipid metabolism.</text>
</comment>
<comment type="subcellular location">
    <subcellularLocation>
        <location evidence="1">Golgi apparatus membrane</location>
        <topology evidence="1">Multi-pass membrane protein</topology>
    </subcellularLocation>
</comment>
<comment type="alternative products">
    <event type="alternative splicing"/>
    <isoform>
        <id>Q9U3D4-1</id>
        <name evidence="6">b</name>
        <sequence type="displayed"/>
    </isoform>
    <isoform>
        <id>Q9U3D4-2</id>
        <name evidence="6">a</name>
        <sequence type="described" ref="VSP_050674"/>
    </isoform>
    <isoform>
        <id>Q9U3D4-3</id>
        <name>c</name>
        <sequence type="described" ref="VSP_039807"/>
    </isoform>
    <isoform>
        <id>Q9U3D4-4</id>
        <name>d</name>
        <sequence type="described" ref="VSP_061062"/>
    </isoform>
</comment>
<comment type="similarity">
    <text evidence="6">Belongs to the sphingomyelin synthase family.</text>
</comment>